<protein>
    <recommendedName>
        <fullName evidence="2">Major capsid protein</fullName>
    </recommendedName>
    <alternativeName>
        <fullName evidence="3">Major head protein</fullName>
    </alternativeName>
</protein>
<accession>V5XWI9</accession>
<accession>P86946</accession>
<proteinExistence type="evidence at protein level"/>
<keyword id="KW-0167">Capsid protein</keyword>
<keyword id="KW-0903">Direct protein sequencing</keyword>
<keyword id="KW-0946">Virion</keyword>
<name>CAPSD_BPS24</name>
<organismHost>
    <name type="scientific">Staphylococcus aureus</name>
    <dbReference type="NCBI Taxonomy" id="1280"/>
</organismHost>
<feature type="propeptide" id="PRO_0000439197" evidence="4">
    <location>
        <begin position="1"/>
        <end position="24"/>
    </location>
</feature>
<feature type="chain" id="PRO_0000439198" description="Major capsid protein" evidence="3">
    <location>
        <begin position="25"/>
        <end position="463"/>
    </location>
</feature>
<sequence>MTIEKNLSDVQQKYADQFQEDVVKSFQTGYGITPDTQIDAGALRREILDDQITMLTWTNEDLIFYRDISRRPAQSTVVKYDQYLRHGNVGHSRFVKEIGVAPVSDPNIRQKTVSMKYVSDTKNMSIASGLVNNIADPSQILTEDAIAVVAKTIEWASFYGDASLTSEVEGEGLEFDGLAKLIDKNNVINAKGNQLTEKHLNEAAVRIGKGFGTATDAYMPIGVHADFVNSILGRQMQLMQDNSGNVNTGYSVNGFYSSRGFIKLHGSTVMENELILDESLQPLPNAPQPAKVTATVETKQKGAFENEEDRAGLSYKVVVNSDDAQSAPSEEVTATVSNVDDGVKLSISVNAMYQQQPQFVSIYRQGKETGMYFLIKRVPVKDAQEDGTIVFVDKNETLPETADVFVGEMSPQVVHLFELLPMMKLPLAQINASITFAVLWYGALALRAPKKWARIKNVRYIAV</sequence>
<organism evidence="2">
    <name type="scientific">Staphylococcus phage S25-4</name>
    <dbReference type="NCBI Taxonomy" id="1041527"/>
    <lineage>
        <taxon>Viruses</taxon>
        <taxon>Duplodnaviria</taxon>
        <taxon>Heunggongvirae</taxon>
        <taxon>Uroviricota</taxon>
        <taxon>Caudoviricetes</taxon>
        <taxon>Herelleviridae</taxon>
        <taxon>Twortvirinae</taxon>
        <taxon>Kayvirus</taxon>
        <taxon>Kayvirus S254</taxon>
    </lineage>
</organism>
<reference evidence="5" key="1">
    <citation type="journal article" date="2014" name="Ann. Microbiol.">
        <title>Genomic and phylogenetic traits of Staphylococcus phages S25-3 and S25-4 (family Myoviridae, genus Twort-like viruses).</title>
        <authorList>
            <person name="Takemura-Uchiyama I."/>
            <person name="Uchiyama J."/>
            <person name="Kato S."/>
            <person name="Ujihara T."/>
            <person name="Daibata M."/>
            <person name="Matsuzaki S."/>
        </authorList>
    </citation>
    <scope>NUCLEOTIDE SEQUENCE [GENOMIC DNA]</scope>
    <scope>PROTEIN SEQUENCE OF 25-44</scope>
    <scope>SUBCELLULAR LOCATION</scope>
</reference>
<comment type="function">
    <text evidence="4">Assembles to form an icosahedral capsid.</text>
</comment>
<comment type="subcellular location">
    <subcellularLocation>
        <location evidence="1">Virion</location>
    </subcellularLocation>
</comment>
<dbReference type="EMBL" id="AB853331">
    <property type="protein sequence ID" value="BAO09463.1"/>
    <property type="molecule type" value="Genomic_DNA"/>
</dbReference>
<dbReference type="RefSeq" id="YP_008854044.1">
    <property type="nucleotide sequence ID" value="NC_022918.1"/>
</dbReference>
<dbReference type="SMR" id="V5XWI9"/>
<dbReference type="GeneID" id="17729277"/>
<dbReference type="KEGG" id="vg:17729277"/>
<dbReference type="Proteomes" id="UP000201261">
    <property type="component" value="Genome"/>
</dbReference>
<dbReference type="GO" id="GO:0019028">
    <property type="term" value="C:viral capsid"/>
    <property type="evidence" value="ECO:0007669"/>
    <property type="project" value="UniProtKB-KW"/>
</dbReference>
<evidence type="ECO:0000269" key="1">
    <source ref="1"/>
</evidence>
<evidence type="ECO:0000303" key="2">
    <source ref="1"/>
</evidence>
<evidence type="ECO:0000305" key="3"/>
<evidence type="ECO:0000305" key="4">
    <source ref="1"/>
</evidence>
<evidence type="ECO:0000312" key="5">
    <source>
        <dbReference type="EMBL" id="BAO09463.1"/>
    </source>
</evidence>